<evidence type="ECO:0000255" key="1">
    <source>
        <dbReference type="HAMAP-Rule" id="MF_01646"/>
    </source>
</evidence>
<keyword id="KW-0169">Cobalamin biosynthesis</keyword>
<keyword id="KW-0456">Lyase</keyword>
<keyword id="KW-0489">Methyltransferase</keyword>
<keyword id="KW-0511">Multifunctional enzyme</keyword>
<keyword id="KW-0520">NAD</keyword>
<keyword id="KW-0560">Oxidoreductase</keyword>
<keyword id="KW-0597">Phosphoprotein</keyword>
<keyword id="KW-0627">Porphyrin biosynthesis</keyword>
<keyword id="KW-0949">S-adenosyl-L-methionine</keyword>
<keyword id="KW-0808">Transferase</keyword>
<protein>
    <recommendedName>
        <fullName evidence="1">Siroheme synthase</fullName>
    </recommendedName>
    <domain>
        <recommendedName>
            <fullName evidence="1">Uroporphyrinogen-III C-methyltransferase</fullName>
            <shortName evidence="1">Urogen III methylase</shortName>
            <ecNumber evidence="1">2.1.1.107</ecNumber>
        </recommendedName>
        <alternativeName>
            <fullName evidence="1">SUMT</fullName>
        </alternativeName>
        <alternativeName>
            <fullName evidence="1">Uroporphyrinogen III methylase</fullName>
            <shortName evidence="1">UROM</shortName>
        </alternativeName>
    </domain>
    <domain>
        <recommendedName>
            <fullName evidence="1">Precorrin-2 dehydrogenase</fullName>
            <ecNumber evidence="1">1.3.1.76</ecNumber>
        </recommendedName>
    </domain>
    <domain>
        <recommendedName>
            <fullName evidence="1">Sirohydrochlorin ferrochelatase</fullName>
            <ecNumber evidence="1">4.99.1.4</ecNumber>
        </recommendedName>
    </domain>
</protein>
<sequence>MDYFPIFCQLRTKPCLLVGGGEVAERKARLLMEAGAILTVNAGRFTPQFEQWQRDGQLTLIAGDFDPALLTGKWLAIAATDDSRVNQQVLAQSEARCIFCNVVDAAQQTGFIMPSIVDRSPLMVAVSSGGSAPVLARILREKLEALLPQHLGQVAHMAGHLRQRVKAHFPTLSLRRRFWERLFAQDRLAQSLANGDTTQAQQQVDALFSAAPMDRGEVTLVGAGPGDAGLLTLKGLQQIQQADVIIYDRLVSDEVMSLVRRDATRIFVGKHAGHHCVPQEEINQTLLDHAREGKRVVRLKGGDPFIFGRGGEELEALAAAGIAFSVVPGITAASGCSAYSGIPLTHRDHAQSVRLVTGHTRQDGQLDWSCLAAAGQTLVFYMGLSQAATIQQRLLQHGMLPDTPIALVENGTTIRQRVVSGTLTQLETLATRVASPSLIIVGDVVTLRPRLNWFRCEAASA</sequence>
<gene>
    <name evidence="1" type="primary">cysG</name>
    <name type="ordered locus">NT01EI_3617</name>
</gene>
<comment type="function">
    <text evidence="1">Multifunctional enzyme that catalyzes the SAM-dependent methylations of uroporphyrinogen III at position C-2 and C-7 to form precorrin-2 via precorrin-1. Then it catalyzes the NAD-dependent ring dehydrogenation of precorrin-2 to yield sirohydrochlorin. Finally, it catalyzes the ferrochelation of sirohydrochlorin to yield siroheme.</text>
</comment>
<comment type="catalytic activity">
    <reaction evidence="1">
        <text>uroporphyrinogen III + 2 S-adenosyl-L-methionine = precorrin-2 + 2 S-adenosyl-L-homocysteine + H(+)</text>
        <dbReference type="Rhea" id="RHEA:32459"/>
        <dbReference type="ChEBI" id="CHEBI:15378"/>
        <dbReference type="ChEBI" id="CHEBI:57308"/>
        <dbReference type="ChEBI" id="CHEBI:57856"/>
        <dbReference type="ChEBI" id="CHEBI:58827"/>
        <dbReference type="ChEBI" id="CHEBI:59789"/>
        <dbReference type="EC" id="2.1.1.107"/>
    </reaction>
</comment>
<comment type="catalytic activity">
    <reaction evidence="1">
        <text>precorrin-2 + NAD(+) = sirohydrochlorin + NADH + 2 H(+)</text>
        <dbReference type="Rhea" id="RHEA:15613"/>
        <dbReference type="ChEBI" id="CHEBI:15378"/>
        <dbReference type="ChEBI" id="CHEBI:57540"/>
        <dbReference type="ChEBI" id="CHEBI:57945"/>
        <dbReference type="ChEBI" id="CHEBI:58351"/>
        <dbReference type="ChEBI" id="CHEBI:58827"/>
        <dbReference type="EC" id="1.3.1.76"/>
    </reaction>
</comment>
<comment type="catalytic activity">
    <reaction evidence="1">
        <text>siroheme + 2 H(+) = sirohydrochlorin + Fe(2+)</text>
        <dbReference type="Rhea" id="RHEA:24360"/>
        <dbReference type="ChEBI" id="CHEBI:15378"/>
        <dbReference type="ChEBI" id="CHEBI:29033"/>
        <dbReference type="ChEBI" id="CHEBI:58351"/>
        <dbReference type="ChEBI" id="CHEBI:60052"/>
        <dbReference type="EC" id="4.99.1.4"/>
    </reaction>
</comment>
<comment type="pathway">
    <text evidence="1">Cofactor biosynthesis; adenosylcobalamin biosynthesis; precorrin-2 from uroporphyrinogen III: step 1/1.</text>
</comment>
<comment type="pathway">
    <text evidence="1">Cofactor biosynthesis; adenosylcobalamin biosynthesis; sirohydrochlorin from precorrin-2: step 1/1.</text>
</comment>
<comment type="pathway">
    <text evidence="1">Porphyrin-containing compound metabolism; siroheme biosynthesis; precorrin-2 from uroporphyrinogen III: step 1/1.</text>
</comment>
<comment type="pathway">
    <text evidence="1">Porphyrin-containing compound metabolism; siroheme biosynthesis; siroheme from sirohydrochlorin: step 1/1.</text>
</comment>
<comment type="pathway">
    <text evidence="1">Porphyrin-containing compound metabolism; siroheme biosynthesis; sirohydrochlorin from precorrin-2: step 1/1.</text>
</comment>
<comment type="similarity">
    <text evidence="1">In the N-terminal section; belongs to the precorrin-2 dehydrogenase / sirohydrochlorin ferrochelatase family.</text>
</comment>
<comment type="similarity">
    <text evidence="1">In the C-terminal section; belongs to the precorrin methyltransferase family.</text>
</comment>
<proteinExistence type="inferred from homology"/>
<dbReference type="EC" id="2.1.1.107" evidence="1"/>
<dbReference type="EC" id="1.3.1.76" evidence="1"/>
<dbReference type="EC" id="4.99.1.4" evidence="1"/>
<dbReference type="EMBL" id="CP001600">
    <property type="protein sequence ID" value="ACR70745.1"/>
    <property type="molecule type" value="Genomic_DNA"/>
</dbReference>
<dbReference type="RefSeq" id="WP_015872786.1">
    <property type="nucleotide sequence ID" value="NZ_CP169062.1"/>
</dbReference>
<dbReference type="SMR" id="C5BGP8"/>
<dbReference type="STRING" id="67780.B6E78_09745"/>
<dbReference type="GeneID" id="69540460"/>
<dbReference type="KEGG" id="eic:NT01EI_3617"/>
<dbReference type="PATRIC" id="fig|634503.3.peg.3224"/>
<dbReference type="HOGENOM" id="CLU_011276_2_0_6"/>
<dbReference type="OrthoDB" id="9815856at2"/>
<dbReference type="UniPathway" id="UPA00148">
    <property type="reaction ID" value="UER00211"/>
</dbReference>
<dbReference type="UniPathway" id="UPA00148">
    <property type="reaction ID" value="UER00222"/>
</dbReference>
<dbReference type="UniPathway" id="UPA00262">
    <property type="reaction ID" value="UER00211"/>
</dbReference>
<dbReference type="UniPathway" id="UPA00262">
    <property type="reaction ID" value="UER00222"/>
</dbReference>
<dbReference type="UniPathway" id="UPA00262">
    <property type="reaction ID" value="UER00376"/>
</dbReference>
<dbReference type="Proteomes" id="UP000001485">
    <property type="component" value="Chromosome"/>
</dbReference>
<dbReference type="GO" id="GO:0051287">
    <property type="term" value="F:NAD binding"/>
    <property type="evidence" value="ECO:0007669"/>
    <property type="project" value="InterPro"/>
</dbReference>
<dbReference type="GO" id="GO:0043115">
    <property type="term" value="F:precorrin-2 dehydrogenase activity"/>
    <property type="evidence" value="ECO:0007669"/>
    <property type="project" value="UniProtKB-UniRule"/>
</dbReference>
<dbReference type="GO" id="GO:0051266">
    <property type="term" value="F:sirohydrochlorin ferrochelatase activity"/>
    <property type="evidence" value="ECO:0007669"/>
    <property type="project" value="UniProtKB-EC"/>
</dbReference>
<dbReference type="GO" id="GO:0004851">
    <property type="term" value="F:uroporphyrin-III C-methyltransferase activity"/>
    <property type="evidence" value="ECO:0007669"/>
    <property type="project" value="UniProtKB-UniRule"/>
</dbReference>
<dbReference type="GO" id="GO:0009236">
    <property type="term" value="P:cobalamin biosynthetic process"/>
    <property type="evidence" value="ECO:0007669"/>
    <property type="project" value="UniProtKB-UniRule"/>
</dbReference>
<dbReference type="GO" id="GO:0032259">
    <property type="term" value="P:methylation"/>
    <property type="evidence" value="ECO:0007669"/>
    <property type="project" value="UniProtKB-KW"/>
</dbReference>
<dbReference type="GO" id="GO:0019354">
    <property type="term" value="P:siroheme biosynthetic process"/>
    <property type="evidence" value="ECO:0007669"/>
    <property type="project" value="UniProtKB-UniRule"/>
</dbReference>
<dbReference type="CDD" id="cd11642">
    <property type="entry name" value="SUMT"/>
    <property type="match status" value="1"/>
</dbReference>
<dbReference type="FunFam" id="3.30.160.110:FF:000001">
    <property type="entry name" value="Siroheme synthase"/>
    <property type="match status" value="1"/>
</dbReference>
<dbReference type="FunFam" id="3.30.950.10:FF:000001">
    <property type="entry name" value="Siroheme synthase"/>
    <property type="match status" value="1"/>
</dbReference>
<dbReference type="FunFam" id="3.40.1010.10:FF:000001">
    <property type="entry name" value="Siroheme synthase"/>
    <property type="match status" value="1"/>
</dbReference>
<dbReference type="Gene3D" id="3.40.1010.10">
    <property type="entry name" value="Cobalt-precorrin-4 Transmethylase, Domain 1"/>
    <property type="match status" value="1"/>
</dbReference>
<dbReference type="Gene3D" id="3.30.950.10">
    <property type="entry name" value="Methyltransferase, Cobalt-precorrin-4 Transmethylase, Domain 2"/>
    <property type="match status" value="1"/>
</dbReference>
<dbReference type="Gene3D" id="3.40.50.720">
    <property type="entry name" value="NAD(P)-binding Rossmann-like Domain"/>
    <property type="match status" value="1"/>
</dbReference>
<dbReference type="Gene3D" id="1.10.8.210">
    <property type="entry name" value="Sirohaem synthase, dimerisation domain"/>
    <property type="match status" value="1"/>
</dbReference>
<dbReference type="Gene3D" id="3.30.160.110">
    <property type="entry name" value="Siroheme synthase, domain 2"/>
    <property type="match status" value="1"/>
</dbReference>
<dbReference type="HAMAP" id="MF_01646">
    <property type="entry name" value="Siroheme_synth"/>
    <property type="match status" value="1"/>
</dbReference>
<dbReference type="InterPro" id="IPR000878">
    <property type="entry name" value="4pyrrol_Mease"/>
</dbReference>
<dbReference type="InterPro" id="IPR035996">
    <property type="entry name" value="4pyrrol_Methylase_sf"/>
</dbReference>
<dbReference type="InterPro" id="IPR014777">
    <property type="entry name" value="4pyrrole_Mease_sub1"/>
</dbReference>
<dbReference type="InterPro" id="IPR014776">
    <property type="entry name" value="4pyrrole_Mease_sub2"/>
</dbReference>
<dbReference type="InterPro" id="IPR006366">
    <property type="entry name" value="CobA/CysG_C"/>
</dbReference>
<dbReference type="InterPro" id="IPR036291">
    <property type="entry name" value="NAD(P)-bd_dom_sf"/>
</dbReference>
<dbReference type="InterPro" id="IPR050161">
    <property type="entry name" value="Siro_Cobalamin_biosynth"/>
</dbReference>
<dbReference type="InterPro" id="IPR037115">
    <property type="entry name" value="Sirohaem_synt_dimer_dom_sf"/>
</dbReference>
<dbReference type="InterPro" id="IPR012409">
    <property type="entry name" value="Sirohaem_synth"/>
</dbReference>
<dbReference type="InterPro" id="IPR028281">
    <property type="entry name" value="Sirohaem_synthase_central"/>
</dbReference>
<dbReference type="InterPro" id="IPR019478">
    <property type="entry name" value="Sirohaem_synthase_dimer_dom"/>
</dbReference>
<dbReference type="InterPro" id="IPR006367">
    <property type="entry name" value="Sirohaem_synthase_N"/>
</dbReference>
<dbReference type="InterPro" id="IPR003043">
    <property type="entry name" value="Uropor_MeTrfase_CS"/>
</dbReference>
<dbReference type="NCBIfam" id="TIGR01469">
    <property type="entry name" value="cobA_cysG_Cterm"/>
    <property type="match status" value="1"/>
</dbReference>
<dbReference type="NCBIfam" id="TIGR01470">
    <property type="entry name" value="cysG_Nterm"/>
    <property type="match status" value="1"/>
</dbReference>
<dbReference type="NCBIfam" id="NF004790">
    <property type="entry name" value="PRK06136.1"/>
    <property type="match status" value="1"/>
</dbReference>
<dbReference type="NCBIfam" id="NF007922">
    <property type="entry name" value="PRK10637.1"/>
    <property type="match status" value="1"/>
</dbReference>
<dbReference type="PANTHER" id="PTHR45790:SF1">
    <property type="entry name" value="SIROHEME SYNTHASE"/>
    <property type="match status" value="1"/>
</dbReference>
<dbReference type="PANTHER" id="PTHR45790">
    <property type="entry name" value="SIROHEME SYNTHASE-RELATED"/>
    <property type="match status" value="1"/>
</dbReference>
<dbReference type="Pfam" id="PF10414">
    <property type="entry name" value="CysG_dimeriser"/>
    <property type="match status" value="1"/>
</dbReference>
<dbReference type="Pfam" id="PF13241">
    <property type="entry name" value="NAD_binding_7"/>
    <property type="match status" value="1"/>
</dbReference>
<dbReference type="Pfam" id="PF14824">
    <property type="entry name" value="Sirohm_synth_M"/>
    <property type="match status" value="1"/>
</dbReference>
<dbReference type="Pfam" id="PF00590">
    <property type="entry name" value="TP_methylase"/>
    <property type="match status" value="1"/>
</dbReference>
<dbReference type="PIRSF" id="PIRSF036426">
    <property type="entry name" value="Sirohaem_synth"/>
    <property type="match status" value="1"/>
</dbReference>
<dbReference type="SUPFAM" id="SSF51735">
    <property type="entry name" value="NAD(P)-binding Rossmann-fold domains"/>
    <property type="match status" value="1"/>
</dbReference>
<dbReference type="SUPFAM" id="SSF75615">
    <property type="entry name" value="Siroheme synthase middle domains-like"/>
    <property type="match status" value="1"/>
</dbReference>
<dbReference type="SUPFAM" id="SSF53790">
    <property type="entry name" value="Tetrapyrrole methylase"/>
    <property type="match status" value="1"/>
</dbReference>
<dbReference type="PROSITE" id="PS00839">
    <property type="entry name" value="SUMT_1"/>
    <property type="match status" value="1"/>
</dbReference>
<dbReference type="PROSITE" id="PS00840">
    <property type="entry name" value="SUMT_2"/>
    <property type="match status" value="1"/>
</dbReference>
<name>CYSG_EDWI9</name>
<feature type="chain" id="PRO_1000215846" description="Siroheme synthase">
    <location>
        <begin position="1"/>
        <end position="461"/>
    </location>
</feature>
<feature type="region of interest" description="Precorrin-2 dehydrogenase /sirohydrochlorin ferrochelatase" evidence="1">
    <location>
        <begin position="1"/>
        <end position="204"/>
    </location>
</feature>
<feature type="region of interest" description="Uroporphyrinogen-III C-methyltransferase" evidence="1">
    <location>
        <begin position="216"/>
        <end position="461"/>
    </location>
</feature>
<feature type="active site" description="Proton acceptor" evidence="1">
    <location>
        <position position="248"/>
    </location>
</feature>
<feature type="active site" description="Proton donor" evidence="1">
    <location>
        <position position="270"/>
    </location>
</feature>
<feature type="binding site" evidence="1">
    <location>
        <begin position="22"/>
        <end position="23"/>
    </location>
    <ligand>
        <name>NAD(+)</name>
        <dbReference type="ChEBI" id="CHEBI:57540"/>
    </ligand>
</feature>
<feature type="binding site" evidence="1">
    <location>
        <begin position="43"/>
        <end position="44"/>
    </location>
    <ligand>
        <name>NAD(+)</name>
        <dbReference type="ChEBI" id="CHEBI:57540"/>
    </ligand>
</feature>
<feature type="binding site" evidence="1">
    <location>
        <position position="225"/>
    </location>
    <ligand>
        <name>S-adenosyl-L-methionine</name>
        <dbReference type="ChEBI" id="CHEBI:59789"/>
    </ligand>
</feature>
<feature type="binding site" evidence="1">
    <location>
        <begin position="301"/>
        <end position="303"/>
    </location>
    <ligand>
        <name>S-adenosyl-L-methionine</name>
        <dbReference type="ChEBI" id="CHEBI:59789"/>
    </ligand>
</feature>
<feature type="binding site" evidence="1">
    <location>
        <position position="306"/>
    </location>
    <ligand>
        <name>S-adenosyl-L-methionine</name>
        <dbReference type="ChEBI" id="CHEBI:59789"/>
    </ligand>
</feature>
<feature type="binding site" evidence="1">
    <location>
        <begin position="331"/>
        <end position="332"/>
    </location>
    <ligand>
        <name>S-adenosyl-L-methionine</name>
        <dbReference type="ChEBI" id="CHEBI:59789"/>
    </ligand>
</feature>
<feature type="binding site" evidence="1">
    <location>
        <position position="382"/>
    </location>
    <ligand>
        <name>S-adenosyl-L-methionine</name>
        <dbReference type="ChEBI" id="CHEBI:59789"/>
    </ligand>
</feature>
<feature type="binding site" evidence="1">
    <location>
        <position position="411"/>
    </location>
    <ligand>
        <name>S-adenosyl-L-methionine</name>
        <dbReference type="ChEBI" id="CHEBI:59789"/>
    </ligand>
</feature>
<feature type="modified residue" description="Phosphoserine" evidence="1">
    <location>
        <position position="128"/>
    </location>
</feature>
<reference key="1">
    <citation type="submission" date="2009-03" db="EMBL/GenBank/DDBJ databases">
        <title>Complete genome sequence of Edwardsiella ictaluri 93-146.</title>
        <authorList>
            <person name="Williams M.L."/>
            <person name="Gillaspy A.F."/>
            <person name="Dyer D.W."/>
            <person name="Thune R.L."/>
            <person name="Waldbieser G.C."/>
            <person name="Schuster S.C."/>
            <person name="Gipson J."/>
            <person name="Zaitshik J."/>
            <person name="Landry C."/>
            <person name="Lawrence M.L."/>
        </authorList>
    </citation>
    <scope>NUCLEOTIDE SEQUENCE [LARGE SCALE GENOMIC DNA]</scope>
    <source>
        <strain>93-146</strain>
    </source>
</reference>
<accession>C5BGP8</accession>
<organism>
    <name type="scientific">Edwardsiella ictaluri (strain 93-146)</name>
    <dbReference type="NCBI Taxonomy" id="634503"/>
    <lineage>
        <taxon>Bacteria</taxon>
        <taxon>Pseudomonadati</taxon>
        <taxon>Pseudomonadota</taxon>
        <taxon>Gammaproteobacteria</taxon>
        <taxon>Enterobacterales</taxon>
        <taxon>Hafniaceae</taxon>
        <taxon>Edwardsiella</taxon>
    </lineage>
</organism>